<comment type="function">
    <text evidence="1 8 9">Calcium- and diacylglycerol-independent serine/ threonine-protein kinase that plays a general protective role against apoptotic stimuli, is involved in NF-kappa-B activation, cell survival, differentiation and polarity, and contributes to the regulation of microtubule dynamics in the early secretory pathway (By similarity). Is required for the formation and maintenance of the zonula adherens during early epithelial development and plays a critical role in organ morphogenesis and in regulating the orientation of cell division (PubMed:11591316). Required for polarized epithelial organization, myocardium coherence and cell connectivity in the early somite stages (PubMed:16319113). Required for heart cone tilt and development of circulatory architecture during embryogenesis (PubMed:16319113).</text>
</comment>
<comment type="catalytic activity">
    <reaction>
        <text>L-seryl-[protein] + ATP = O-phospho-L-seryl-[protein] + ADP + H(+)</text>
        <dbReference type="Rhea" id="RHEA:17989"/>
        <dbReference type="Rhea" id="RHEA-COMP:9863"/>
        <dbReference type="Rhea" id="RHEA-COMP:11604"/>
        <dbReference type="ChEBI" id="CHEBI:15378"/>
        <dbReference type="ChEBI" id="CHEBI:29999"/>
        <dbReference type="ChEBI" id="CHEBI:30616"/>
        <dbReference type="ChEBI" id="CHEBI:83421"/>
        <dbReference type="ChEBI" id="CHEBI:456216"/>
        <dbReference type="EC" id="2.7.11.13"/>
    </reaction>
</comment>
<comment type="catalytic activity">
    <reaction>
        <text>L-threonyl-[protein] + ATP = O-phospho-L-threonyl-[protein] + ADP + H(+)</text>
        <dbReference type="Rhea" id="RHEA:46608"/>
        <dbReference type="Rhea" id="RHEA-COMP:11060"/>
        <dbReference type="Rhea" id="RHEA-COMP:11605"/>
        <dbReference type="ChEBI" id="CHEBI:15378"/>
        <dbReference type="ChEBI" id="CHEBI:30013"/>
        <dbReference type="ChEBI" id="CHEBI:30616"/>
        <dbReference type="ChEBI" id="CHEBI:61977"/>
        <dbReference type="ChEBI" id="CHEBI:456216"/>
        <dbReference type="EC" id="2.7.11.13"/>
    </reaction>
</comment>
<comment type="activity regulation">
    <text evidence="1">Exhibits an elevated basal enzymatic activity and is not regulated by diacylglycerol, phosphatidylserine, phorbol esters or calcium ions (By similarity). Two specific sites, Thr-404 (activation loop of the kinase domain) and Thr-556 (turn motif), need to be phosphorylated for its full activation (By similarity).</text>
</comment>
<comment type="domain">
    <text>The C1 zinc finger does not bind the diacylglycerol (DAG).</text>
</comment>
<comment type="disruption phenotype">
    <text evidence="9">Morpholino knockdown embryos show disrupted epithelium organization and cell-cell junctions of the myocardium at the 16 somite stage (PubMed:16319113). Loss of myocardial layer coherence, tilting of the heart cone and myocardial cell connections between the myocardium and surrounding tissues at the 28 somite stage (PubMed:16319113). Fully arrested heart cone tilt at 32 hpf and loss of peripheral circulation architecture at 36 hpf (PubMed:16319113).</text>
</comment>
<comment type="similarity">
    <text evidence="10">Belongs to the protein kinase superfamily. AGC Ser/Thr protein kinase family. PKC subfamily.</text>
</comment>
<comment type="caution">
    <text evidence="10">It is uncertain whether Met-1 or Met-9 is the initiator.</text>
</comment>
<comment type="sequence caution" evidence="10">
    <conflict type="erroneous initiation">
        <sequence resource="EMBL-CDS" id="AAK91291"/>
    </conflict>
</comment>
<sequence length="588" mass="67322">MPTLRDSTMSHPGENPHQVRVKAYYRGDIMITHFEPSISYEGLCNEVRDMCSMDNDQLFTMKWIDEEGDPCTVSSQLELEEALRLYELNKDSELIIHVFPCVPEKPGMPCPGEDKSIYRRGARRWRKLYYATGHAFQAKRFNRRAHCAICTDRIWGLGRQGYKCINCKLLVHKKCHKLVTVECGRQVIQDPMIGRIDPGSTHPEHPDQVLGKKNSTESINHEGEEHEAVGSRESGKAVSSLGLIDFDLLRVIGRGSYAKVLLVRLKKTERIYAMKVVKKELVNDDEDIDWVQTEKHVFEQASNHPFLVGLHSCFQTESRLFFVIEYVNGGDLMFHMQRQRKLPEEHARFYSAEISLALNYLHERGIIYRDLKLDNVLLDSEGHIKLTDYGMCKEGLRPGDTTSTFCGTPNYIAPEILRGEDYGFSVDWWALGVLMFEMMAGRSPFDIVGSSDNPDQNTEDYLFQVILEKQIRIPRSLSVKAASVLKGFLNKESKERLGCHPQTGFADIMAHPFFRNVDWDLMEQKQVVPPFKPNISGEFGLDNFDAQFTNEPIQLTPDDDDAVKKIDQSEFEGFEYINPLLMSAEECV</sequence>
<dbReference type="EC" id="2.7.11.13"/>
<dbReference type="EMBL" id="AF390109">
    <property type="protein sequence ID" value="AAK91291.1"/>
    <property type="status" value="ALT_INIT"/>
    <property type="molecule type" value="mRNA"/>
</dbReference>
<dbReference type="EMBL" id="BC047164">
    <property type="protein sequence ID" value="AAH47164.1"/>
    <property type="molecule type" value="mRNA"/>
</dbReference>
<dbReference type="RefSeq" id="NP_571930.2">
    <property type="nucleotide sequence ID" value="NM_131855.2"/>
</dbReference>
<dbReference type="SMR" id="Q90XF2"/>
<dbReference type="FunCoup" id="Q90XF2">
    <property type="interactions" value="1861"/>
</dbReference>
<dbReference type="STRING" id="7955.ENSDARP00000005309"/>
<dbReference type="PaxDb" id="7955-ENSDARP00000005309"/>
<dbReference type="Ensembl" id="ENSDART00000015723">
    <property type="protein sequence ID" value="ENSDARP00000005309"/>
    <property type="gene ID" value="ENSDARG00000021225"/>
</dbReference>
<dbReference type="GeneID" id="117507"/>
<dbReference type="KEGG" id="dre:117507"/>
<dbReference type="AGR" id="ZFIN:ZDB-GENE-011105-1"/>
<dbReference type="CTD" id="5584"/>
<dbReference type="ZFIN" id="ZDB-GENE-011105-1">
    <property type="gene designation" value="prkci"/>
</dbReference>
<dbReference type="eggNOG" id="KOG0695">
    <property type="taxonomic scope" value="Eukaryota"/>
</dbReference>
<dbReference type="HOGENOM" id="CLU_000288_63_29_1"/>
<dbReference type="InParanoid" id="Q90XF2"/>
<dbReference type="OMA" id="FTIKWID"/>
<dbReference type="OrthoDB" id="63267at2759"/>
<dbReference type="PhylomeDB" id="Q90XF2"/>
<dbReference type="TreeFam" id="TF102004"/>
<dbReference type="Reactome" id="R-DRE-209543">
    <property type="pathway name" value="p75NTR recruits signalling complexes"/>
</dbReference>
<dbReference type="Reactome" id="R-DRE-420029">
    <property type="pathway name" value="Tight junction interactions"/>
</dbReference>
<dbReference type="Reactome" id="R-DRE-9755511">
    <property type="pathway name" value="KEAP1-NFE2L2 pathway"/>
</dbReference>
<dbReference type="PRO" id="PR:Q90XF2"/>
<dbReference type="Proteomes" id="UP000000437">
    <property type="component" value="Chromosome 2"/>
</dbReference>
<dbReference type="Bgee" id="ENSDARG00000021225">
    <property type="expression patterns" value="Expressed in blastula and 33 other cell types or tissues"/>
</dbReference>
<dbReference type="GO" id="GO:0005829">
    <property type="term" value="C:cytosol"/>
    <property type="evidence" value="ECO:0000250"/>
    <property type="project" value="HGNC"/>
</dbReference>
<dbReference type="GO" id="GO:0005634">
    <property type="term" value="C:nucleus"/>
    <property type="evidence" value="ECO:0000250"/>
    <property type="project" value="HGNC"/>
</dbReference>
<dbReference type="GO" id="GO:0005886">
    <property type="term" value="C:plasma membrane"/>
    <property type="evidence" value="ECO:0000314"/>
    <property type="project" value="ZFIN"/>
</dbReference>
<dbReference type="GO" id="GO:0005915">
    <property type="term" value="C:zonula adherens"/>
    <property type="evidence" value="ECO:0000314"/>
    <property type="project" value="ZFIN"/>
</dbReference>
<dbReference type="GO" id="GO:0005524">
    <property type="term" value="F:ATP binding"/>
    <property type="evidence" value="ECO:0007669"/>
    <property type="project" value="UniProtKB-KW"/>
</dbReference>
<dbReference type="GO" id="GO:0004697">
    <property type="term" value="F:diacylglycerol-dependent serine/threonine kinase activity"/>
    <property type="evidence" value="ECO:0007669"/>
    <property type="project" value="UniProtKB-EC"/>
</dbReference>
<dbReference type="GO" id="GO:0005543">
    <property type="term" value="F:phospholipid binding"/>
    <property type="evidence" value="ECO:0000250"/>
    <property type="project" value="HGNC"/>
</dbReference>
<dbReference type="GO" id="GO:0106310">
    <property type="term" value="F:protein serine kinase activity"/>
    <property type="evidence" value="ECO:0007669"/>
    <property type="project" value="RHEA"/>
</dbReference>
<dbReference type="GO" id="GO:0004674">
    <property type="term" value="F:protein serine/threonine kinase activity"/>
    <property type="evidence" value="ECO:0000250"/>
    <property type="project" value="HGNC"/>
</dbReference>
<dbReference type="GO" id="GO:0008270">
    <property type="term" value="F:zinc ion binding"/>
    <property type="evidence" value="ECO:0007669"/>
    <property type="project" value="UniProtKB-KW"/>
</dbReference>
<dbReference type="GO" id="GO:0034334">
    <property type="term" value="P:adherens junction maintenance"/>
    <property type="evidence" value="ECO:0000315"/>
    <property type="project" value="ZFIN"/>
</dbReference>
<dbReference type="GO" id="GO:0034332">
    <property type="term" value="P:adherens junction organization"/>
    <property type="evidence" value="ECO:0000315"/>
    <property type="project" value="ZFIN"/>
</dbReference>
<dbReference type="GO" id="GO:0045176">
    <property type="term" value="P:apical protein localization"/>
    <property type="evidence" value="ECO:0000315"/>
    <property type="project" value="ZFIN"/>
</dbReference>
<dbReference type="GO" id="GO:0007420">
    <property type="term" value="P:brain development"/>
    <property type="evidence" value="ECO:0000315"/>
    <property type="project" value="ZFIN"/>
</dbReference>
<dbReference type="GO" id="GO:0030031">
    <property type="term" value="P:cell projection assembly"/>
    <property type="evidence" value="ECO:0000315"/>
    <property type="project" value="ZFIN"/>
</dbReference>
<dbReference type="GO" id="GO:0045217">
    <property type="term" value="P:cell-cell junction maintenance"/>
    <property type="evidence" value="ECO:0000315"/>
    <property type="project" value="ZFIN"/>
</dbReference>
<dbReference type="GO" id="GO:0045216">
    <property type="term" value="P:cell-cell junction organization"/>
    <property type="evidence" value="ECO:0000250"/>
    <property type="project" value="HGNC"/>
</dbReference>
<dbReference type="GO" id="GO:0032869">
    <property type="term" value="P:cellular response to insulin stimulus"/>
    <property type="evidence" value="ECO:0000318"/>
    <property type="project" value="GO_Central"/>
</dbReference>
<dbReference type="GO" id="GO:0007502">
    <property type="term" value="P:digestive tract mesoderm development"/>
    <property type="evidence" value="ECO:0000315"/>
    <property type="project" value="ZFIN"/>
</dbReference>
<dbReference type="GO" id="GO:0048546">
    <property type="term" value="P:digestive tract morphogenesis"/>
    <property type="evidence" value="ECO:0000315"/>
    <property type="project" value="ZFIN"/>
</dbReference>
<dbReference type="GO" id="GO:0021744">
    <property type="term" value="P:dorsal motor nucleus of vagus nerve development"/>
    <property type="evidence" value="ECO:0000315"/>
    <property type="project" value="ZFIN"/>
</dbReference>
<dbReference type="GO" id="GO:0035050">
    <property type="term" value="P:embryonic heart tube development"/>
    <property type="evidence" value="ECO:0000315"/>
    <property type="project" value="ZFIN"/>
</dbReference>
<dbReference type="GO" id="GO:0030010">
    <property type="term" value="P:establishment of cell polarity"/>
    <property type="evidence" value="ECO:0000318"/>
    <property type="project" value="GO_Central"/>
</dbReference>
<dbReference type="GO" id="GO:0000132">
    <property type="term" value="P:establishment of mitotic spindle orientation"/>
    <property type="evidence" value="ECO:0000315"/>
    <property type="project" value="ZFIN"/>
</dbReference>
<dbReference type="GO" id="GO:0016332">
    <property type="term" value="P:establishment or maintenance of polarity of embryonic epithelium"/>
    <property type="evidence" value="ECO:0000315"/>
    <property type="project" value="ZFIN"/>
</dbReference>
<dbReference type="GO" id="GO:0048699">
    <property type="term" value="P:generation of neurons"/>
    <property type="evidence" value="ECO:0000315"/>
    <property type="project" value="ZFIN"/>
</dbReference>
<dbReference type="GO" id="GO:0007507">
    <property type="term" value="P:heart development"/>
    <property type="evidence" value="ECO:0000315"/>
    <property type="project" value="ZFIN"/>
</dbReference>
<dbReference type="GO" id="GO:0035556">
    <property type="term" value="P:intracellular signal transduction"/>
    <property type="evidence" value="ECO:0000318"/>
    <property type="project" value="GO_Central"/>
</dbReference>
<dbReference type="GO" id="GO:0045199">
    <property type="term" value="P:maintenance of epithelial cell apical/basal polarity"/>
    <property type="evidence" value="ECO:0000315"/>
    <property type="project" value="ZFIN"/>
</dbReference>
<dbReference type="GO" id="GO:0008078">
    <property type="term" value="P:mesodermal cell migration"/>
    <property type="evidence" value="ECO:0000315"/>
    <property type="project" value="ZFIN"/>
</dbReference>
<dbReference type="GO" id="GO:0001738">
    <property type="term" value="P:morphogenesis of a polarized epithelium"/>
    <property type="evidence" value="ECO:0000315"/>
    <property type="project" value="ZFIN"/>
</dbReference>
<dbReference type="GO" id="GO:0001841">
    <property type="term" value="P:neural tube formation"/>
    <property type="evidence" value="ECO:0000316"/>
    <property type="project" value="ZFIN"/>
</dbReference>
<dbReference type="GO" id="GO:0007405">
    <property type="term" value="P:neuroblast proliferation"/>
    <property type="evidence" value="ECO:0000315"/>
    <property type="project" value="ZFIN"/>
</dbReference>
<dbReference type="GO" id="GO:0007097">
    <property type="term" value="P:nuclear migration"/>
    <property type="evidence" value="ECO:0000315"/>
    <property type="project" value="ZFIN"/>
</dbReference>
<dbReference type="GO" id="GO:0042476">
    <property type="term" value="P:odontogenesis"/>
    <property type="evidence" value="ECO:0000315"/>
    <property type="project" value="ZFIN"/>
</dbReference>
<dbReference type="GO" id="GO:0035845">
    <property type="term" value="P:photoreceptor cell outer segment organization"/>
    <property type="evidence" value="ECO:0000315"/>
    <property type="project" value="ZFIN"/>
</dbReference>
<dbReference type="GO" id="GO:0035778">
    <property type="term" value="P:pronephric nephron tubule epithelial cell differentiation"/>
    <property type="evidence" value="ECO:0000316"/>
    <property type="project" value="ZFIN"/>
</dbReference>
<dbReference type="GO" id="GO:0072659">
    <property type="term" value="P:protein localization to plasma membrane"/>
    <property type="evidence" value="ECO:0000318"/>
    <property type="project" value="GO_Central"/>
</dbReference>
<dbReference type="GO" id="GO:0060041">
    <property type="term" value="P:retina development in camera-type eye"/>
    <property type="evidence" value="ECO:0000315"/>
    <property type="project" value="ZFIN"/>
</dbReference>
<dbReference type="GO" id="GO:0060042">
    <property type="term" value="P:retina morphogenesis in camera-type eye"/>
    <property type="evidence" value="ECO:0000315"/>
    <property type="project" value="ZFIN"/>
</dbReference>
<dbReference type="GO" id="GO:0021591">
    <property type="term" value="P:ventricular system development"/>
    <property type="evidence" value="ECO:0000315"/>
    <property type="project" value="ZFIN"/>
</dbReference>
<dbReference type="CDD" id="cd20794">
    <property type="entry name" value="C1_aPKC"/>
    <property type="match status" value="1"/>
</dbReference>
<dbReference type="CDD" id="cd06404">
    <property type="entry name" value="PB1_aPKC"/>
    <property type="match status" value="1"/>
</dbReference>
<dbReference type="CDD" id="cd05618">
    <property type="entry name" value="STKc_aPKC_iota"/>
    <property type="match status" value="1"/>
</dbReference>
<dbReference type="FunFam" id="1.10.510.10:FF:000048">
    <property type="entry name" value="Protein kinase C"/>
    <property type="match status" value="1"/>
</dbReference>
<dbReference type="FunFam" id="3.10.20.90:FF:000071">
    <property type="entry name" value="Protein kinase C"/>
    <property type="match status" value="1"/>
</dbReference>
<dbReference type="FunFam" id="3.30.200.20:FF:000070">
    <property type="entry name" value="Protein kinase C"/>
    <property type="match status" value="1"/>
</dbReference>
<dbReference type="FunFam" id="3.30.60.20:FF:000012">
    <property type="entry name" value="Protein kinase C"/>
    <property type="match status" value="1"/>
</dbReference>
<dbReference type="Gene3D" id="3.30.60.20">
    <property type="match status" value="1"/>
</dbReference>
<dbReference type="Gene3D" id="3.10.20.90">
    <property type="entry name" value="Phosphatidylinositol 3-kinase Catalytic Subunit, Chain A, domain 1"/>
    <property type="match status" value="1"/>
</dbReference>
<dbReference type="Gene3D" id="3.30.200.20">
    <property type="entry name" value="Phosphorylase Kinase, domain 1"/>
    <property type="match status" value="1"/>
</dbReference>
<dbReference type="Gene3D" id="1.10.510.10">
    <property type="entry name" value="Transferase(Phosphotransferase) domain 1"/>
    <property type="match status" value="1"/>
</dbReference>
<dbReference type="InterPro" id="IPR000961">
    <property type="entry name" value="AGC-kinase_C"/>
</dbReference>
<dbReference type="InterPro" id="IPR034661">
    <property type="entry name" value="aPKC_iota"/>
</dbReference>
<dbReference type="InterPro" id="IPR046349">
    <property type="entry name" value="C1-like_sf"/>
</dbReference>
<dbReference type="InterPro" id="IPR020454">
    <property type="entry name" value="DAG/PE-bd"/>
</dbReference>
<dbReference type="InterPro" id="IPR011009">
    <property type="entry name" value="Kinase-like_dom_sf"/>
</dbReference>
<dbReference type="InterPro" id="IPR053793">
    <property type="entry name" value="PB1-like"/>
</dbReference>
<dbReference type="InterPro" id="IPR034877">
    <property type="entry name" value="PB1_aPKC"/>
</dbReference>
<dbReference type="InterPro" id="IPR000270">
    <property type="entry name" value="PB1_dom"/>
</dbReference>
<dbReference type="InterPro" id="IPR002219">
    <property type="entry name" value="PE/DAG-bd"/>
</dbReference>
<dbReference type="InterPro" id="IPR012233">
    <property type="entry name" value="PKC"/>
</dbReference>
<dbReference type="InterPro" id="IPR017892">
    <property type="entry name" value="Pkinase_C"/>
</dbReference>
<dbReference type="InterPro" id="IPR000719">
    <property type="entry name" value="Prot_kinase_dom"/>
</dbReference>
<dbReference type="InterPro" id="IPR017441">
    <property type="entry name" value="Protein_kinase_ATP_BS"/>
</dbReference>
<dbReference type="InterPro" id="IPR008271">
    <property type="entry name" value="Ser/Thr_kinase_AS"/>
</dbReference>
<dbReference type="PANTHER" id="PTHR24351">
    <property type="entry name" value="RIBOSOMAL PROTEIN S6 KINASE"/>
    <property type="match status" value="1"/>
</dbReference>
<dbReference type="Pfam" id="PF00130">
    <property type="entry name" value="C1_1"/>
    <property type="match status" value="1"/>
</dbReference>
<dbReference type="Pfam" id="PF00564">
    <property type="entry name" value="PB1"/>
    <property type="match status" value="1"/>
</dbReference>
<dbReference type="Pfam" id="PF00069">
    <property type="entry name" value="Pkinase"/>
    <property type="match status" value="1"/>
</dbReference>
<dbReference type="Pfam" id="PF00433">
    <property type="entry name" value="Pkinase_C"/>
    <property type="match status" value="1"/>
</dbReference>
<dbReference type="PIRSF" id="PIRSF000554">
    <property type="entry name" value="PKC_zeta"/>
    <property type="match status" value="1"/>
</dbReference>
<dbReference type="PRINTS" id="PR00008">
    <property type="entry name" value="DAGPEDOMAIN"/>
</dbReference>
<dbReference type="SMART" id="SM00109">
    <property type="entry name" value="C1"/>
    <property type="match status" value="1"/>
</dbReference>
<dbReference type="SMART" id="SM00666">
    <property type="entry name" value="PB1"/>
    <property type="match status" value="1"/>
</dbReference>
<dbReference type="SMART" id="SM00133">
    <property type="entry name" value="S_TK_X"/>
    <property type="match status" value="1"/>
</dbReference>
<dbReference type="SMART" id="SM00220">
    <property type="entry name" value="S_TKc"/>
    <property type="match status" value="1"/>
</dbReference>
<dbReference type="SUPFAM" id="SSF54277">
    <property type="entry name" value="CAD &amp; PB1 domains"/>
    <property type="match status" value="1"/>
</dbReference>
<dbReference type="SUPFAM" id="SSF57889">
    <property type="entry name" value="Cysteine-rich domain"/>
    <property type="match status" value="1"/>
</dbReference>
<dbReference type="SUPFAM" id="SSF56112">
    <property type="entry name" value="Protein kinase-like (PK-like)"/>
    <property type="match status" value="1"/>
</dbReference>
<dbReference type="PROSITE" id="PS51285">
    <property type="entry name" value="AGC_KINASE_CTER"/>
    <property type="match status" value="1"/>
</dbReference>
<dbReference type="PROSITE" id="PS51745">
    <property type="entry name" value="PB1"/>
    <property type="match status" value="1"/>
</dbReference>
<dbReference type="PROSITE" id="PS00107">
    <property type="entry name" value="PROTEIN_KINASE_ATP"/>
    <property type="match status" value="1"/>
</dbReference>
<dbReference type="PROSITE" id="PS50011">
    <property type="entry name" value="PROTEIN_KINASE_DOM"/>
    <property type="match status" value="1"/>
</dbReference>
<dbReference type="PROSITE" id="PS00108">
    <property type="entry name" value="PROTEIN_KINASE_ST"/>
    <property type="match status" value="1"/>
</dbReference>
<dbReference type="PROSITE" id="PS00479">
    <property type="entry name" value="ZF_DAG_PE_1"/>
    <property type="match status" value="1"/>
</dbReference>
<dbReference type="PROSITE" id="PS50081">
    <property type="entry name" value="ZF_DAG_PE_2"/>
    <property type="match status" value="1"/>
</dbReference>
<organism>
    <name type="scientific">Danio rerio</name>
    <name type="common">Zebrafish</name>
    <name type="synonym">Brachydanio rerio</name>
    <dbReference type="NCBI Taxonomy" id="7955"/>
    <lineage>
        <taxon>Eukaryota</taxon>
        <taxon>Metazoa</taxon>
        <taxon>Chordata</taxon>
        <taxon>Craniata</taxon>
        <taxon>Vertebrata</taxon>
        <taxon>Euteleostomi</taxon>
        <taxon>Actinopterygii</taxon>
        <taxon>Neopterygii</taxon>
        <taxon>Teleostei</taxon>
        <taxon>Ostariophysi</taxon>
        <taxon>Cypriniformes</taxon>
        <taxon>Danionidae</taxon>
        <taxon>Danioninae</taxon>
        <taxon>Danio</taxon>
    </lineage>
</organism>
<gene>
    <name type="primary">prkci</name>
    <name type="synonym">hal</name>
</gene>
<keyword id="KW-0067">ATP-binding</keyword>
<keyword id="KW-0217">Developmental protein</keyword>
<keyword id="KW-0418">Kinase</keyword>
<keyword id="KW-0479">Metal-binding</keyword>
<keyword id="KW-0547">Nucleotide-binding</keyword>
<keyword id="KW-0597">Phosphoprotein</keyword>
<keyword id="KW-1185">Reference proteome</keyword>
<keyword id="KW-0723">Serine/threonine-protein kinase</keyword>
<keyword id="KW-0808">Transferase</keyword>
<keyword id="KW-0862">Zinc</keyword>
<keyword id="KW-0863">Zinc-finger</keyword>
<feature type="chain" id="PRO_0000055713" description="Protein kinase C iota type">
    <location>
        <begin position="1"/>
        <end position="588"/>
    </location>
</feature>
<feature type="domain" description="PB1" evidence="5">
    <location>
        <begin position="18"/>
        <end position="101"/>
    </location>
</feature>
<feature type="domain" description="Protein kinase" evidence="2">
    <location>
        <begin position="246"/>
        <end position="514"/>
    </location>
</feature>
<feature type="domain" description="AGC-kinase C-terminal" evidence="4">
    <location>
        <begin position="515"/>
        <end position="586"/>
    </location>
</feature>
<feature type="zinc finger region" description="Phorbol-ester/DAG-type" evidence="3">
    <location>
        <begin position="133"/>
        <end position="183"/>
    </location>
</feature>
<feature type="region of interest" description="Disordered" evidence="7">
    <location>
        <begin position="194"/>
        <end position="213"/>
    </location>
</feature>
<feature type="active site" description="Proton acceptor" evidence="2 6">
    <location>
        <position position="370"/>
    </location>
</feature>
<feature type="binding site" evidence="2">
    <location>
        <begin position="252"/>
        <end position="260"/>
    </location>
    <ligand>
        <name>ATP</name>
        <dbReference type="ChEBI" id="CHEBI:30616"/>
    </ligand>
</feature>
<feature type="binding site" evidence="2">
    <location>
        <position position="275"/>
    </location>
    <ligand>
        <name>ATP</name>
        <dbReference type="ChEBI" id="CHEBI:30616"/>
    </ligand>
</feature>
<feature type="modified residue" description="Phosphothreonine" evidence="10">
    <location>
        <position position="404"/>
    </location>
</feature>
<feature type="modified residue" description="Phosphothreonine" evidence="10">
    <location>
        <position position="556"/>
    </location>
</feature>
<reference key="1">
    <citation type="journal article" date="2001" name="Curr. Biol.">
        <title>Positional cloning of heart and soul reveals multiple roles for PKC lambda in zebrafish organogenesis.</title>
        <authorList>
            <person name="Horne-Badovinac S."/>
            <person name="Lin D."/>
            <person name="Waldron S."/>
            <person name="Schwarz M."/>
            <person name="Mbamalu G."/>
            <person name="Pawson T."/>
            <person name="Jan Y.-N."/>
            <person name="Stainier D.Y."/>
            <person name="Abdelilah-Seyfried S."/>
        </authorList>
    </citation>
    <scope>NUCLEOTIDE SEQUENCE [MRNA]</scope>
    <scope>FUNCTION</scope>
</reference>
<reference key="2">
    <citation type="submission" date="2003-02" db="EMBL/GenBank/DDBJ databases">
        <authorList>
            <consortium name="NIH - Zebrafish Gene Collection (ZGC) project"/>
        </authorList>
    </citation>
    <scope>NUCLEOTIDE SEQUENCE [LARGE SCALE MRNA]</scope>
    <source>
        <strain>AB</strain>
    </source>
</reference>
<reference key="3">
    <citation type="journal article" date="2006" name="Development">
        <title>Heart and soul/PRKCi and nagie oko/Mpp5 regulate myocardial coherence and remodeling during cardiac morphogenesis.</title>
        <authorList>
            <person name="Rohr S."/>
            <person name="Bit-Avragim N."/>
            <person name="Abdelilah-Seyfried S."/>
        </authorList>
    </citation>
    <scope>FUNCTION</scope>
    <scope>DISRUPTION PHENOTYPE</scope>
</reference>
<proteinExistence type="evidence at transcript level"/>
<accession>Q90XF2</accession>
<accession>Q7ZU17</accession>
<name>KPCI_DANRE</name>
<evidence type="ECO:0000250" key="1">
    <source>
        <dbReference type="UniProtKB" id="P41743"/>
    </source>
</evidence>
<evidence type="ECO:0000255" key="2">
    <source>
        <dbReference type="PROSITE-ProRule" id="PRU00159"/>
    </source>
</evidence>
<evidence type="ECO:0000255" key="3">
    <source>
        <dbReference type="PROSITE-ProRule" id="PRU00226"/>
    </source>
</evidence>
<evidence type="ECO:0000255" key="4">
    <source>
        <dbReference type="PROSITE-ProRule" id="PRU00618"/>
    </source>
</evidence>
<evidence type="ECO:0000255" key="5">
    <source>
        <dbReference type="PROSITE-ProRule" id="PRU01081"/>
    </source>
</evidence>
<evidence type="ECO:0000255" key="6">
    <source>
        <dbReference type="PROSITE-ProRule" id="PRU10027"/>
    </source>
</evidence>
<evidence type="ECO:0000256" key="7">
    <source>
        <dbReference type="SAM" id="MobiDB-lite"/>
    </source>
</evidence>
<evidence type="ECO:0000269" key="8">
    <source>
    </source>
</evidence>
<evidence type="ECO:0000269" key="9">
    <source>
    </source>
</evidence>
<evidence type="ECO:0000305" key="10"/>
<protein>
    <recommendedName>
        <fullName>Protein kinase C iota type</fullName>
        <ecNumber>2.7.11.13</ecNumber>
    </recommendedName>
    <alternativeName>
        <fullName>Atypical protein kinase C-lambda/iota</fullName>
        <shortName>aPKC-lambda/iota</shortName>
    </alternativeName>
    <alternativeName>
        <fullName>Heart and soul protein</fullName>
    </alternativeName>
    <alternativeName>
        <fullName>nPKC-iota</fullName>
    </alternativeName>
</protein>